<comment type="function">
    <text evidence="1">Serine protease inhibitor.</text>
</comment>
<comment type="subcellular location">
    <subcellularLocation>
        <location evidence="1">Secreted</location>
    </subcellularLocation>
</comment>
<comment type="tissue specificity">
    <text>Expressed by the venom gland.</text>
</comment>
<comment type="similarity">
    <text evidence="4">Belongs to the venom Kunitz-type family.</text>
</comment>
<evidence type="ECO:0000250" key="1"/>
<evidence type="ECO:0000255" key="2"/>
<evidence type="ECO:0000255" key="3">
    <source>
        <dbReference type="PROSITE-ProRule" id="PRU00031"/>
    </source>
</evidence>
<evidence type="ECO:0000305" key="4"/>
<dbReference type="EMBL" id="EF990737">
    <property type="protein sequence ID" value="ABV64391.1"/>
    <property type="molecule type" value="mRNA"/>
</dbReference>
<dbReference type="EMBL" id="EU401840">
    <property type="protein sequence ID" value="ACC77789.1"/>
    <property type="molecule type" value="Genomic_DNA"/>
</dbReference>
<dbReference type="EMBL" id="EU401842">
    <property type="protein sequence ID" value="ACC77791.1"/>
    <property type="molecule type" value="Genomic_DNA"/>
</dbReference>
<dbReference type="SMR" id="B5KL29"/>
<dbReference type="MEROPS" id="I02.052"/>
<dbReference type="GO" id="GO:0005576">
    <property type="term" value="C:extracellular region"/>
    <property type="evidence" value="ECO:0007669"/>
    <property type="project" value="UniProtKB-SubCell"/>
</dbReference>
<dbReference type="GO" id="GO:0004867">
    <property type="term" value="F:serine-type endopeptidase inhibitor activity"/>
    <property type="evidence" value="ECO:0007669"/>
    <property type="project" value="UniProtKB-KW"/>
</dbReference>
<dbReference type="CDD" id="cd22594">
    <property type="entry name" value="Kunitz_textilinin-like"/>
    <property type="match status" value="1"/>
</dbReference>
<dbReference type="FunFam" id="4.10.410.10:FF:000020">
    <property type="entry name" value="Collagen, type VI, alpha 3"/>
    <property type="match status" value="1"/>
</dbReference>
<dbReference type="Gene3D" id="4.10.410.10">
    <property type="entry name" value="Pancreatic trypsin inhibitor Kunitz domain"/>
    <property type="match status" value="1"/>
</dbReference>
<dbReference type="InterPro" id="IPR002223">
    <property type="entry name" value="Kunitz_BPTI"/>
</dbReference>
<dbReference type="InterPro" id="IPR036880">
    <property type="entry name" value="Kunitz_BPTI_sf"/>
</dbReference>
<dbReference type="InterPro" id="IPR020901">
    <property type="entry name" value="Prtase_inh_Kunz-CS"/>
</dbReference>
<dbReference type="InterPro" id="IPR050098">
    <property type="entry name" value="TFPI/VKTCI-like"/>
</dbReference>
<dbReference type="PANTHER" id="PTHR10083">
    <property type="entry name" value="KUNITZ-TYPE PROTEASE INHIBITOR-RELATED"/>
    <property type="match status" value="1"/>
</dbReference>
<dbReference type="Pfam" id="PF00014">
    <property type="entry name" value="Kunitz_BPTI"/>
    <property type="match status" value="1"/>
</dbReference>
<dbReference type="PRINTS" id="PR00759">
    <property type="entry name" value="BASICPTASE"/>
</dbReference>
<dbReference type="SMART" id="SM00131">
    <property type="entry name" value="KU"/>
    <property type="match status" value="1"/>
</dbReference>
<dbReference type="SUPFAM" id="SSF57362">
    <property type="entry name" value="BPTI-like"/>
    <property type="match status" value="1"/>
</dbReference>
<dbReference type="PROSITE" id="PS00280">
    <property type="entry name" value="BPTI_KUNITZ_1"/>
    <property type="match status" value="1"/>
</dbReference>
<dbReference type="PROSITE" id="PS50279">
    <property type="entry name" value="BPTI_KUNITZ_2"/>
    <property type="match status" value="1"/>
</dbReference>
<proteinExistence type="evidence at transcript level"/>
<keyword id="KW-1015">Disulfide bond</keyword>
<keyword id="KW-0646">Protease inhibitor</keyword>
<keyword id="KW-0964">Secreted</keyword>
<keyword id="KW-0722">Serine protease inhibitor</keyword>
<keyword id="KW-0732">Signal</keyword>
<accession>B5KL29</accession>
<accession>B5L5Q4</accession>
<organism>
    <name type="scientific">Oxyuranus scutellatus scutellatus</name>
    <name type="common">Australian taipan</name>
    <name type="synonym">Coastal taipan</name>
    <dbReference type="NCBI Taxonomy" id="8667"/>
    <lineage>
        <taxon>Eukaryota</taxon>
        <taxon>Metazoa</taxon>
        <taxon>Chordata</taxon>
        <taxon>Craniata</taxon>
        <taxon>Vertebrata</taxon>
        <taxon>Euteleostomi</taxon>
        <taxon>Lepidosauria</taxon>
        <taxon>Squamata</taxon>
        <taxon>Bifurcata</taxon>
        <taxon>Unidentata</taxon>
        <taxon>Episquamata</taxon>
        <taxon>Toxicofera</taxon>
        <taxon>Serpentes</taxon>
        <taxon>Colubroidea</taxon>
        <taxon>Elapidae</taxon>
        <taxon>Hydrophiinae</taxon>
        <taxon>Oxyuranus</taxon>
    </lineage>
</organism>
<reference key="1">
    <citation type="journal article" date="2008" name="Cell. Mol. Life Sci.">
        <title>Common evolution of waprin and Kunitz-like toxin families in Australian venomous snakes.</title>
        <authorList>
            <person name="St Pierre L."/>
            <person name="Earl S.T."/>
            <person name="Filippovich I."/>
            <person name="Sorokina N."/>
            <person name="Masci P.P."/>
            <person name="De Jersey J."/>
            <person name="Lavin M.F."/>
        </authorList>
    </citation>
    <scope>NUCLEOTIDE SEQUENCE [GENOMIC DNA / MRNA]</scope>
    <source>
        <tissue>Venom gland</tissue>
    </source>
</reference>
<name>VKT3_OXYSC</name>
<feature type="signal peptide" evidence="2">
    <location>
        <begin position="1"/>
        <end position="24"/>
    </location>
</feature>
<feature type="chain" id="PRO_5000395588" description="Kunitz-type serine protease inhibitor scutellin-3">
    <location>
        <begin position="25"/>
        <end position="83"/>
    </location>
</feature>
<feature type="domain" description="BPTI/Kunitz inhibitor" evidence="3">
    <location>
        <begin position="31"/>
        <end position="81"/>
    </location>
</feature>
<feature type="disulfide bond" evidence="3">
    <location>
        <begin position="31"/>
        <end position="81"/>
    </location>
</feature>
<feature type="disulfide bond" evidence="3">
    <location>
        <begin position="40"/>
        <end position="64"/>
    </location>
</feature>
<feature type="disulfide bond" evidence="3">
    <location>
        <begin position="56"/>
        <end position="77"/>
    </location>
</feature>
<sequence>MSSGGLLLLLGLLTLWEVLTPVSSKDRPKFCELPADIGPCEDFTGAFHYSPREHECIEFIYGGCKGNANNFNTLEECESACAA</sequence>
<protein>
    <recommendedName>
        <fullName>Kunitz-type serine protease inhibitor scutellin-3</fullName>
    </recommendedName>
</protein>